<comment type="function">
    <text evidence="1">Transfers and isomerizes the ribose moiety from AdoMet to the 7-aminomethyl group of 7-deazaguanine (preQ1-tRNA) to give epoxyqueuosine (oQ-tRNA).</text>
</comment>
<comment type="catalytic activity">
    <reaction evidence="1">
        <text>7-aminomethyl-7-carbaguanosine(34) in tRNA + S-adenosyl-L-methionine = epoxyqueuosine(34) in tRNA + adenine + L-methionine + 2 H(+)</text>
        <dbReference type="Rhea" id="RHEA:32155"/>
        <dbReference type="Rhea" id="RHEA-COMP:10342"/>
        <dbReference type="Rhea" id="RHEA-COMP:18582"/>
        <dbReference type="ChEBI" id="CHEBI:15378"/>
        <dbReference type="ChEBI" id="CHEBI:16708"/>
        <dbReference type="ChEBI" id="CHEBI:57844"/>
        <dbReference type="ChEBI" id="CHEBI:59789"/>
        <dbReference type="ChEBI" id="CHEBI:82833"/>
        <dbReference type="ChEBI" id="CHEBI:194443"/>
        <dbReference type="EC" id="2.4.99.17"/>
    </reaction>
</comment>
<comment type="pathway">
    <text evidence="1">tRNA modification; tRNA-queuosine biosynthesis.</text>
</comment>
<comment type="subunit">
    <text evidence="1">Monomer.</text>
</comment>
<comment type="subcellular location">
    <subcellularLocation>
        <location evidence="1">Cytoplasm</location>
    </subcellularLocation>
</comment>
<comment type="similarity">
    <text evidence="1">Belongs to the QueA family.</text>
</comment>
<gene>
    <name evidence="1" type="primary">queA</name>
    <name type="ordered locus">BCQ_4204</name>
</gene>
<proteinExistence type="inferred from homology"/>
<sequence length="350" mass="39383">MDINLFDFHLPEELIAQVPLEERETSRLMVLDRETGDIEHKHFTDILSYLHEGDCLVLNETKVMPARLHGVKEDPGAHIEVLLLKQEEGDKWETLVKPAKRVKEGTVISFGEGKLKATCTGTADQGGRQLEFSYDGIFYEILDELGEMPLPPYIKETLEDRDRYQTVYAKEIGSAAAPTAGLHFTEELLEKLKQKGVELAFITLHVGLGTFRPVSADTIEEHHMHAEYYHMSEETAALLNRVKENGGRIITVGTTSTRTLETIATDHDGKLCAASGWTDIFMYPGYEFKAIDGLITNFHLPKSTLIMLVSAFANRDNVLHAYNEAVKEKYRFFSFGDAMFVASHAKMGNK</sequence>
<keyword id="KW-0963">Cytoplasm</keyword>
<keyword id="KW-0671">Queuosine biosynthesis</keyword>
<keyword id="KW-0949">S-adenosyl-L-methionine</keyword>
<keyword id="KW-0808">Transferase</keyword>
<reference key="1">
    <citation type="journal article" date="2009" name="J. Bacteriol.">
        <title>Complete genome sequence of the extremophilic Bacillus cereus strain Q1 with industrial applications.</title>
        <authorList>
            <person name="Xiong Z."/>
            <person name="Jiang Y."/>
            <person name="Qi D."/>
            <person name="Lu H."/>
            <person name="Yang F."/>
            <person name="Yang J."/>
            <person name="Chen L."/>
            <person name="Sun L."/>
            <person name="Xu X."/>
            <person name="Xue Y."/>
            <person name="Zhu Y."/>
            <person name="Jin Q."/>
        </authorList>
    </citation>
    <scope>NUCLEOTIDE SEQUENCE [LARGE SCALE GENOMIC DNA]</scope>
    <source>
        <strain>Q1</strain>
    </source>
</reference>
<dbReference type="EC" id="2.4.99.17" evidence="1"/>
<dbReference type="EMBL" id="CP000227">
    <property type="protein sequence ID" value="ACM14631.1"/>
    <property type="molecule type" value="Genomic_DNA"/>
</dbReference>
<dbReference type="SMR" id="B9IYZ2"/>
<dbReference type="KEGG" id="bcq:BCQ_4204"/>
<dbReference type="HOGENOM" id="CLU_039110_1_0_9"/>
<dbReference type="UniPathway" id="UPA00392"/>
<dbReference type="Proteomes" id="UP000000441">
    <property type="component" value="Chromosome"/>
</dbReference>
<dbReference type="GO" id="GO:0005737">
    <property type="term" value="C:cytoplasm"/>
    <property type="evidence" value="ECO:0007669"/>
    <property type="project" value="UniProtKB-SubCell"/>
</dbReference>
<dbReference type="GO" id="GO:0051075">
    <property type="term" value="F:S-adenosylmethionine:tRNA ribosyltransferase-isomerase activity"/>
    <property type="evidence" value="ECO:0007669"/>
    <property type="project" value="UniProtKB-EC"/>
</dbReference>
<dbReference type="GO" id="GO:0008616">
    <property type="term" value="P:queuosine biosynthetic process"/>
    <property type="evidence" value="ECO:0007669"/>
    <property type="project" value="UniProtKB-UniRule"/>
</dbReference>
<dbReference type="GO" id="GO:0002099">
    <property type="term" value="P:tRNA wobble guanine modification"/>
    <property type="evidence" value="ECO:0007669"/>
    <property type="project" value="TreeGrafter"/>
</dbReference>
<dbReference type="FunFam" id="2.40.10.240:FF:000002">
    <property type="entry name" value="S-adenosylmethionine:tRNA ribosyltransferase-isomerase"/>
    <property type="match status" value="1"/>
</dbReference>
<dbReference type="FunFam" id="3.40.1780.10:FF:000001">
    <property type="entry name" value="S-adenosylmethionine:tRNA ribosyltransferase-isomerase"/>
    <property type="match status" value="1"/>
</dbReference>
<dbReference type="Gene3D" id="2.40.10.240">
    <property type="entry name" value="QueA-like"/>
    <property type="match status" value="1"/>
</dbReference>
<dbReference type="Gene3D" id="3.40.1780.10">
    <property type="entry name" value="QueA-like"/>
    <property type="match status" value="1"/>
</dbReference>
<dbReference type="HAMAP" id="MF_00113">
    <property type="entry name" value="QueA"/>
    <property type="match status" value="1"/>
</dbReference>
<dbReference type="InterPro" id="IPR003699">
    <property type="entry name" value="QueA"/>
</dbReference>
<dbReference type="InterPro" id="IPR042118">
    <property type="entry name" value="QueA_dom1"/>
</dbReference>
<dbReference type="InterPro" id="IPR042119">
    <property type="entry name" value="QueA_dom2"/>
</dbReference>
<dbReference type="InterPro" id="IPR036100">
    <property type="entry name" value="QueA_sf"/>
</dbReference>
<dbReference type="NCBIfam" id="NF001140">
    <property type="entry name" value="PRK00147.1"/>
    <property type="match status" value="1"/>
</dbReference>
<dbReference type="NCBIfam" id="TIGR00113">
    <property type="entry name" value="queA"/>
    <property type="match status" value="1"/>
</dbReference>
<dbReference type="PANTHER" id="PTHR30307">
    <property type="entry name" value="S-ADENOSYLMETHIONINE:TRNA RIBOSYLTRANSFERASE-ISOMERASE"/>
    <property type="match status" value="1"/>
</dbReference>
<dbReference type="PANTHER" id="PTHR30307:SF0">
    <property type="entry name" value="S-ADENOSYLMETHIONINE:TRNA RIBOSYLTRANSFERASE-ISOMERASE"/>
    <property type="match status" value="1"/>
</dbReference>
<dbReference type="Pfam" id="PF02547">
    <property type="entry name" value="Queuosine_synth"/>
    <property type="match status" value="1"/>
</dbReference>
<dbReference type="SUPFAM" id="SSF111337">
    <property type="entry name" value="QueA-like"/>
    <property type="match status" value="1"/>
</dbReference>
<feature type="chain" id="PRO_1000119142" description="S-adenosylmethionine:tRNA ribosyltransferase-isomerase">
    <location>
        <begin position="1"/>
        <end position="350"/>
    </location>
</feature>
<accession>B9IYZ2</accession>
<evidence type="ECO:0000255" key="1">
    <source>
        <dbReference type="HAMAP-Rule" id="MF_00113"/>
    </source>
</evidence>
<name>QUEA_BACCQ</name>
<protein>
    <recommendedName>
        <fullName evidence="1">S-adenosylmethionine:tRNA ribosyltransferase-isomerase</fullName>
        <ecNumber evidence="1">2.4.99.17</ecNumber>
    </recommendedName>
    <alternativeName>
        <fullName evidence="1">Queuosine biosynthesis protein QueA</fullName>
    </alternativeName>
</protein>
<organism>
    <name type="scientific">Bacillus cereus (strain Q1)</name>
    <dbReference type="NCBI Taxonomy" id="361100"/>
    <lineage>
        <taxon>Bacteria</taxon>
        <taxon>Bacillati</taxon>
        <taxon>Bacillota</taxon>
        <taxon>Bacilli</taxon>
        <taxon>Bacillales</taxon>
        <taxon>Bacillaceae</taxon>
        <taxon>Bacillus</taxon>
        <taxon>Bacillus cereus group</taxon>
    </lineage>
</organism>